<organism>
    <name type="scientific">Helicobacter pylori (strain P12)</name>
    <dbReference type="NCBI Taxonomy" id="570508"/>
    <lineage>
        <taxon>Bacteria</taxon>
        <taxon>Pseudomonadati</taxon>
        <taxon>Campylobacterota</taxon>
        <taxon>Epsilonproteobacteria</taxon>
        <taxon>Campylobacterales</taxon>
        <taxon>Helicobacteraceae</taxon>
        <taxon>Helicobacter</taxon>
    </lineage>
</organism>
<proteinExistence type="inferred from homology"/>
<accession>B6JKP5</accession>
<comment type="catalytic activity">
    <reaction evidence="1">
        <text>tRNA(Arg) + L-arginine + ATP = L-arginyl-tRNA(Arg) + AMP + diphosphate</text>
        <dbReference type="Rhea" id="RHEA:20301"/>
        <dbReference type="Rhea" id="RHEA-COMP:9658"/>
        <dbReference type="Rhea" id="RHEA-COMP:9673"/>
        <dbReference type="ChEBI" id="CHEBI:30616"/>
        <dbReference type="ChEBI" id="CHEBI:32682"/>
        <dbReference type="ChEBI" id="CHEBI:33019"/>
        <dbReference type="ChEBI" id="CHEBI:78442"/>
        <dbReference type="ChEBI" id="CHEBI:78513"/>
        <dbReference type="ChEBI" id="CHEBI:456215"/>
        <dbReference type="EC" id="6.1.1.19"/>
    </reaction>
</comment>
<comment type="subunit">
    <text evidence="1">Monomer.</text>
</comment>
<comment type="subcellular location">
    <subcellularLocation>
        <location evidence="1">Cytoplasm</location>
    </subcellularLocation>
</comment>
<comment type="similarity">
    <text evidence="1">Belongs to the class-I aminoacyl-tRNA synthetase family.</text>
</comment>
<sequence>MHTLIKGVLEEILEEEVIIEYPKDREHGHYATPIAFNLAKVFKKSPLVIAEELALKISTHEKTQGLFDSVVACKGYINFTLSLDFLERFTQKALELKERFGSQIKSERSQKIFLEFVSANPTGPLHIGHARGAVFGDSLAKIARFLGHEVLCEYYVNDMGSQIRLLGLSVWLAYREHVLKESVTYPEVFYKGEYIIEIAKKANNDLEPSLFKENEETIIEILSGYAKDLMLLEIKDNLDALGIHFDSYASEKEVFKHKDAVFERLEKANALYEKDSKIWLKSSLYQDESDRVLIKEDKSCTYLAGDIVYHDEKFKQNYTKYINIWGADHHGYIARVKASLEFLGHDSNKLEVLLAQMVRLLKDNEPYKMSKRAGNFILIKDVVDDVGKDALRFIFLSKRLDTHLEFDVNTLKKQDSSNPIYYIHYANSRIHTMLEKSPFSKEEVLQTPLTNLNAEEKYLLFSALSLPKAVESSFEEYGLQKMCEYAKTLASEFHRFYNAGKILDTPKAKELLKICLMVSLSLTNAFKLLGIEIKTKISAKD</sequence>
<gene>
    <name evidence="1" type="primary">argS</name>
    <name type="ordered locus">HPP12_0316</name>
</gene>
<name>SYR_HELP2</name>
<evidence type="ECO:0000255" key="1">
    <source>
        <dbReference type="HAMAP-Rule" id="MF_00123"/>
    </source>
</evidence>
<keyword id="KW-0030">Aminoacyl-tRNA synthetase</keyword>
<keyword id="KW-0067">ATP-binding</keyword>
<keyword id="KW-0963">Cytoplasm</keyword>
<keyword id="KW-0436">Ligase</keyword>
<keyword id="KW-0547">Nucleotide-binding</keyword>
<keyword id="KW-0648">Protein biosynthesis</keyword>
<dbReference type="EC" id="6.1.1.19" evidence="1"/>
<dbReference type="EMBL" id="CP001217">
    <property type="protein sequence ID" value="ACJ07473.1"/>
    <property type="molecule type" value="Genomic_DNA"/>
</dbReference>
<dbReference type="SMR" id="B6JKP5"/>
<dbReference type="KEGG" id="hpp:HPP12_0316"/>
<dbReference type="HOGENOM" id="CLU_006406_0_1_7"/>
<dbReference type="Proteomes" id="UP000008198">
    <property type="component" value="Chromosome"/>
</dbReference>
<dbReference type="GO" id="GO:0005737">
    <property type="term" value="C:cytoplasm"/>
    <property type="evidence" value="ECO:0007669"/>
    <property type="project" value="UniProtKB-SubCell"/>
</dbReference>
<dbReference type="GO" id="GO:0004814">
    <property type="term" value="F:arginine-tRNA ligase activity"/>
    <property type="evidence" value="ECO:0007669"/>
    <property type="project" value="UniProtKB-UniRule"/>
</dbReference>
<dbReference type="GO" id="GO:0005524">
    <property type="term" value="F:ATP binding"/>
    <property type="evidence" value="ECO:0007669"/>
    <property type="project" value="UniProtKB-UniRule"/>
</dbReference>
<dbReference type="GO" id="GO:0006420">
    <property type="term" value="P:arginyl-tRNA aminoacylation"/>
    <property type="evidence" value="ECO:0007669"/>
    <property type="project" value="UniProtKB-UniRule"/>
</dbReference>
<dbReference type="CDD" id="cd00671">
    <property type="entry name" value="ArgRS_core"/>
    <property type="match status" value="1"/>
</dbReference>
<dbReference type="FunFam" id="3.30.1360.70:FF:000008">
    <property type="entry name" value="Arginine--tRNA ligase"/>
    <property type="match status" value="1"/>
</dbReference>
<dbReference type="FunFam" id="3.40.50.620:FF:000062">
    <property type="entry name" value="Arginine--tRNA ligase"/>
    <property type="match status" value="1"/>
</dbReference>
<dbReference type="Gene3D" id="3.30.1360.70">
    <property type="entry name" value="Arginyl tRNA synthetase N-terminal domain"/>
    <property type="match status" value="1"/>
</dbReference>
<dbReference type="Gene3D" id="3.40.50.620">
    <property type="entry name" value="HUPs"/>
    <property type="match status" value="1"/>
</dbReference>
<dbReference type="Gene3D" id="1.10.730.10">
    <property type="entry name" value="Isoleucyl-tRNA Synthetase, Domain 1"/>
    <property type="match status" value="1"/>
</dbReference>
<dbReference type="HAMAP" id="MF_00123">
    <property type="entry name" value="Arg_tRNA_synth"/>
    <property type="match status" value="1"/>
</dbReference>
<dbReference type="InterPro" id="IPR001412">
    <property type="entry name" value="aa-tRNA-synth_I_CS"/>
</dbReference>
<dbReference type="InterPro" id="IPR001278">
    <property type="entry name" value="Arg-tRNA-ligase"/>
</dbReference>
<dbReference type="InterPro" id="IPR005148">
    <property type="entry name" value="Arg-tRNA-synth_N"/>
</dbReference>
<dbReference type="InterPro" id="IPR036695">
    <property type="entry name" value="Arg-tRNA-synth_N_sf"/>
</dbReference>
<dbReference type="InterPro" id="IPR035684">
    <property type="entry name" value="ArgRS_core"/>
</dbReference>
<dbReference type="InterPro" id="IPR008909">
    <property type="entry name" value="DALR_anticod-bd"/>
</dbReference>
<dbReference type="InterPro" id="IPR014729">
    <property type="entry name" value="Rossmann-like_a/b/a_fold"/>
</dbReference>
<dbReference type="InterPro" id="IPR009080">
    <property type="entry name" value="tRNAsynth_Ia_anticodon-bd"/>
</dbReference>
<dbReference type="NCBIfam" id="TIGR00456">
    <property type="entry name" value="argS"/>
    <property type="match status" value="1"/>
</dbReference>
<dbReference type="PANTHER" id="PTHR11956:SF5">
    <property type="entry name" value="ARGININE--TRNA LIGASE, CYTOPLASMIC"/>
    <property type="match status" value="1"/>
</dbReference>
<dbReference type="PANTHER" id="PTHR11956">
    <property type="entry name" value="ARGINYL-TRNA SYNTHETASE"/>
    <property type="match status" value="1"/>
</dbReference>
<dbReference type="Pfam" id="PF03485">
    <property type="entry name" value="Arg_tRNA_synt_N"/>
    <property type="match status" value="1"/>
</dbReference>
<dbReference type="Pfam" id="PF05746">
    <property type="entry name" value="DALR_1"/>
    <property type="match status" value="1"/>
</dbReference>
<dbReference type="Pfam" id="PF00750">
    <property type="entry name" value="tRNA-synt_1d"/>
    <property type="match status" value="1"/>
</dbReference>
<dbReference type="PRINTS" id="PR01038">
    <property type="entry name" value="TRNASYNTHARG"/>
</dbReference>
<dbReference type="SMART" id="SM01016">
    <property type="entry name" value="Arg_tRNA_synt_N"/>
    <property type="match status" value="1"/>
</dbReference>
<dbReference type="SMART" id="SM00836">
    <property type="entry name" value="DALR_1"/>
    <property type="match status" value="1"/>
</dbReference>
<dbReference type="SUPFAM" id="SSF47323">
    <property type="entry name" value="Anticodon-binding domain of a subclass of class I aminoacyl-tRNA synthetases"/>
    <property type="match status" value="1"/>
</dbReference>
<dbReference type="SUPFAM" id="SSF55190">
    <property type="entry name" value="Arginyl-tRNA synthetase (ArgRS), N-terminal 'additional' domain"/>
    <property type="match status" value="1"/>
</dbReference>
<dbReference type="SUPFAM" id="SSF52374">
    <property type="entry name" value="Nucleotidylyl transferase"/>
    <property type="match status" value="1"/>
</dbReference>
<dbReference type="PROSITE" id="PS00178">
    <property type="entry name" value="AA_TRNA_LIGASE_I"/>
    <property type="match status" value="1"/>
</dbReference>
<reference key="1">
    <citation type="submission" date="2008-10" db="EMBL/GenBank/DDBJ databases">
        <title>The complete genome sequence of Helicobacter pylori strain P12.</title>
        <authorList>
            <person name="Fischer W."/>
            <person name="Windhager L."/>
            <person name="Karnholz A."/>
            <person name="Zeiller M."/>
            <person name="Zimmer R."/>
            <person name="Haas R."/>
        </authorList>
    </citation>
    <scope>NUCLEOTIDE SEQUENCE [LARGE SCALE GENOMIC DNA]</scope>
    <source>
        <strain>P12</strain>
    </source>
</reference>
<feature type="chain" id="PRO_1000095369" description="Arginine--tRNA ligase">
    <location>
        <begin position="1"/>
        <end position="541"/>
    </location>
</feature>
<feature type="short sequence motif" description="'HIGH' region">
    <location>
        <begin position="119"/>
        <end position="129"/>
    </location>
</feature>
<protein>
    <recommendedName>
        <fullName evidence="1">Arginine--tRNA ligase</fullName>
        <ecNumber evidence="1">6.1.1.19</ecNumber>
    </recommendedName>
    <alternativeName>
        <fullName evidence="1">Arginyl-tRNA synthetase</fullName>
        <shortName evidence="1">ArgRS</shortName>
    </alternativeName>
</protein>